<sequence length="238" mass="26865">MNDHKPPIEEFMGLSFNMSTVLMTTIACLIVFLITFIGTRRLSMNPSGLQNFLEWVVDFIRGIIKANMDWKVGGRFIVLAYALLFYVFVANMLGLPFELYNPTTHEVWWKSPTSDPVLTLTMAAFVVILTHYYGIKIQGFGKYLKGYITPVPFLLPFKIIEEFANTLTLGMRLFGNVYAKEILMILLVTAGTSGLIGMFGAFLPLIVWQAFGLFIGAIQAYIFAMLAMVYMAHKVESH</sequence>
<protein>
    <recommendedName>
        <fullName evidence="1">ATP synthase subunit a</fullName>
    </recommendedName>
    <alternativeName>
        <fullName evidence="1">ATP synthase F0 sector subunit a</fullName>
    </alternativeName>
    <alternativeName>
        <fullName evidence="1">F-ATPase subunit 6</fullName>
    </alternativeName>
</protein>
<proteinExistence type="inferred from homology"/>
<keyword id="KW-0066">ATP synthesis</keyword>
<keyword id="KW-1003">Cell membrane</keyword>
<keyword id="KW-0138">CF(0)</keyword>
<keyword id="KW-0375">Hydrogen ion transport</keyword>
<keyword id="KW-0406">Ion transport</keyword>
<keyword id="KW-0472">Membrane</keyword>
<keyword id="KW-1185">Reference proteome</keyword>
<keyword id="KW-0812">Transmembrane</keyword>
<keyword id="KW-1133">Transmembrane helix</keyword>
<keyword id="KW-0813">Transport</keyword>
<name>ATP6_ALKPO</name>
<gene>
    <name evidence="1" type="primary">atpB</name>
    <name type="ordered locus">BpOF4_06880</name>
</gene>
<organism>
    <name type="scientific">Alkalihalophilus pseudofirmus (strain ATCC BAA-2126 / JCM 17055 / OF4)</name>
    <name type="common">Bacillus pseudofirmus</name>
    <dbReference type="NCBI Taxonomy" id="398511"/>
    <lineage>
        <taxon>Bacteria</taxon>
        <taxon>Bacillati</taxon>
        <taxon>Bacillota</taxon>
        <taxon>Bacilli</taxon>
        <taxon>Bacillales</taxon>
        <taxon>Bacillaceae</taxon>
        <taxon>Alkalihalophilus</taxon>
    </lineage>
</organism>
<comment type="function">
    <text evidence="1">Key component of the proton channel; it plays a direct role in the translocation of protons across the membrane.</text>
</comment>
<comment type="subunit">
    <text evidence="1">F-type ATPases have 2 components, CF(1) - the catalytic core - and CF(0) - the membrane proton channel. CF(1) has five subunits: alpha(3), beta(3), gamma(1), delta(1), epsilon(1). CF(0) has three main subunits: a(1), b(2) and c(9-12). The alpha and beta chains form an alternating ring which encloses part of the gamma chain. CF(1) is attached to CF(0) by a central stalk formed by the gamma and epsilon chains, while a peripheral stalk is formed by the delta and b chains.</text>
</comment>
<comment type="subcellular location">
    <subcellularLocation>
        <location evidence="1">Cell membrane</location>
        <topology evidence="1">Multi-pass membrane protein</topology>
    </subcellularLocation>
</comment>
<comment type="similarity">
    <text evidence="1">Belongs to the ATPase A chain family.</text>
</comment>
<evidence type="ECO:0000255" key="1">
    <source>
        <dbReference type="HAMAP-Rule" id="MF_01393"/>
    </source>
</evidence>
<accession>P22476</accession>
<accession>D3G0F9</accession>
<reference key="1">
    <citation type="journal article" date="1991" name="Mol. Gen. Genet.">
        <title>Organization and nucleotide sequence of the atp genes encoding the ATP synthase from alkaliphilic Bacillus firmus OF4.</title>
        <authorList>
            <person name="Ivey D.M."/>
            <person name="Krulwich T.A."/>
        </authorList>
    </citation>
    <scope>NUCLEOTIDE SEQUENCE [GENOMIC DNA]</scope>
</reference>
<reference key="2">
    <citation type="submission" date="2000-12" db="EMBL/GenBank/DDBJ databases">
        <authorList>
            <person name="Hicks D."/>
            <person name="Krulwich T.A."/>
        </authorList>
    </citation>
    <scope>SEQUENCE REVISION</scope>
</reference>
<reference key="3">
    <citation type="journal article" date="2011" name="Environ. Microbiol.">
        <title>Genome of alkaliphilic Bacillus pseudofirmus OF4 reveals adaptations that support the ability to grow in an external pH range from 7.5 to 11.4.</title>
        <authorList>
            <person name="Janto B."/>
            <person name="Ahmed A."/>
            <person name="Ito M."/>
            <person name="Liu J."/>
            <person name="Hicks D.B."/>
            <person name="Pagni S."/>
            <person name="Fackelmayer O.J."/>
            <person name="Smith T.A."/>
            <person name="Earl J."/>
            <person name="Elbourne L.D."/>
            <person name="Hassan K."/>
            <person name="Paulsen I.T."/>
            <person name="Kolsto A.B."/>
            <person name="Tourasse N.J."/>
            <person name="Ehrlich G.D."/>
            <person name="Boissy R."/>
            <person name="Ivey D.M."/>
            <person name="Li G."/>
            <person name="Xue Y."/>
            <person name="Ma Y."/>
            <person name="Hu F.Z."/>
            <person name="Krulwich T.A."/>
        </authorList>
    </citation>
    <scope>NUCLEOTIDE SEQUENCE [LARGE SCALE GENOMIC DNA]</scope>
    <source>
        <strain>ATCC BAA-2126 / JCM 17055 / OF4</strain>
    </source>
</reference>
<feature type="chain" id="PRO_0000082044" description="ATP synthase subunit a">
    <location>
        <begin position="1"/>
        <end position="238"/>
    </location>
</feature>
<feature type="transmembrane region" description="Helical" evidence="1">
    <location>
        <begin position="18"/>
        <end position="38"/>
    </location>
</feature>
<feature type="transmembrane region" description="Helical" evidence="1">
    <location>
        <begin position="76"/>
        <end position="96"/>
    </location>
</feature>
<feature type="transmembrane region" description="Helical" evidence="1">
    <location>
        <begin position="117"/>
        <end position="137"/>
    </location>
</feature>
<feature type="transmembrane region" description="Helical" evidence="1">
    <location>
        <begin position="195"/>
        <end position="215"/>
    </location>
</feature>
<feature type="transmembrane region" description="Helical" evidence="1">
    <location>
        <begin position="216"/>
        <end position="236"/>
    </location>
</feature>
<dbReference type="EMBL" id="AF330160">
    <property type="protein sequence ID" value="AAG48358.1"/>
    <property type="molecule type" value="Genomic_DNA"/>
</dbReference>
<dbReference type="EMBL" id="CP001878">
    <property type="protein sequence ID" value="ADC49434.1"/>
    <property type="molecule type" value="Genomic_DNA"/>
</dbReference>
<dbReference type="PIR" id="S17720">
    <property type="entry name" value="S17720"/>
</dbReference>
<dbReference type="RefSeq" id="WP_012960707.1">
    <property type="nucleotide sequence ID" value="NC_013791.2"/>
</dbReference>
<dbReference type="SMR" id="P22476"/>
<dbReference type="STRING" id="398511.BpOF4_06880"/>
<dbReference type="KEGG" id="bpf:BpOF4_06880"/>
<dbReference type="eggNOG" id="COG0356">
    <property type="taxonomic scope" value="Bacteria"/>
</dbReference>
<dbReference type="HOGENOM" id="CLU_041018_2_3_9"/>
<dbReference type="Proteomes" id="UP000001544">
    <property type="component" value="Chromosome"/>
</dbReference>
<dbReference type="GO" id="GO:0005886">
    <property type="term" value="C:plasma membrane"/>
    <property type="evidence" value="ECO:0007669"/>
    <property type="project" value="UniProtKB-SubCell"/>
</dbReference>
<dbReference type="GO" id="GO:0045259">
    <property type="term" value="C:proton-transporting ATP synthase complex"/>
    <property type="evidence" value="ECO:0007669"/>
    <property type="project" value="UniProtKB-KW"/>
</dbReference>
<dbReference type="GO" id="GO:0046933">
    <property type="term" value="F:proton-transporting ATP synthase activity, rotational mechanism"/>
    <property type="evidence" value="ECO:0007669"/>
    <property type="project" value="UniProtKB-UniRule"/>
</dbReference>
<dbReference type="GO" id="GO:0042777">
    <property type="term" value="P:proton motive force-driven plasma membrane ATP synthesis"/>
    <property type="evidence" value="ECO:0007669"/>
    <property type="project" value="TreeGrafter"/>
</dbReference>
<dbReference type="CDD" id="cd00310">
    <property type="entry name" value="ATP-synt_Fo_a_6"/>
    <property type="match status" value="1"/>
</dbReference>
<dbReference type="Gene3D" id="1.20.120.220">
    <property type="entry name" value="ATP synthase, F0 complex, subunit A"/>
    <property type="match status" value="1"/>
</dbReference>
<dbReference type="HAMAP" id="MF_01393">
    <property type="entry name" value="ATP_synth_a_bact"/>
    <property type="match status" value="1"/>
</dbReference>
<dbReference type="InterPro" id="IPR045082">
    <property type="entry name" value="ATP_syn_F0_a_bact/chloroplast"/>
</dbReference>
<dbReference type="InterPro" id="IPR000568">
    <property type="entry name" value="ATP_synth_F0_asu"/>
</dbReference>
<dbReference type="InterPro" id="IPR023011">
    <property type="entry name" value="ATP_synth_F0_asu_AS"/>
</dbReference>
<dbReference type="InterPro" id="IPR035908">
    <property type="entry name" value="F0_ATP_A_sf"/>
</dbReference>
<dbReference type="NCBIfam" id="TIGR01131">
    <property type="entry name" value="ATP_synt_6_or_A"/>
    <property type="match status" value="1"/>
</dbReference>
<dbReference type="NCBIfam" id="NF004479">
    <property type="entry name" value="PRK05815.1-4"/>
    <property type="match status" value="1"/>
</dbReference>
<dbReference type="PANTHER" id="PTHR42823">
    <property type="entry name" value="ATP SYNTHASE SUBUNIT A, CHLOROPLASTIC"/>
    <property type="match status" value="1"/>
</dbReference>
<dbReference type="PANTHER" id="PTHR42823:SF3">
    <property type="entry name" value="ATP SYNTHASE SUBUNIT A, CHLOROPLASTIC"/>
    <property type="match status" value="1"/>
</dbReference>
<dbReference type="Pfam" id="PF00119">
    <property type="entry name" value="ATP-synt_A"/>
    <property type="match status" value="1"/>
</dbReference>
<dbReference type="PRINTS" id="PR00123">
    <property type="entry name" value="ATPASEA"/>
</dbReference>
<dbReference type="SUPFAM" id="SSF81336">
    <property type="entry name" value="F1F0 ATP synthase subunit A"/>
    <property type="match status" value="1"/>
</dbReference>
<dbReference type="PROSITE" id="PS00449">
    <property type="entry name" value="ATPASE_A"/>
    <property type="match status" value="1"/>
</dbReference>
<dbReference type="PROSITE" id="PS51257">
    <property type="entry name" value="PROKAR_LIPOPROTEIN"/>
    <property type="match status" value="1"/>
</dbReference>